<accession>Q60SM4</accession>
<accession>A8XYR0</accession>
<gene>
    <name type="primary">rpb-11</name>
    <name type="ORF">CBG20834</name>
</gene>
<keyword id="KW-0240">DNA-directed RNA polymerase</keyword>
<keyword id="KW-0539">Nucleus</keyword>
<keyword id="KW-1185">Reference proteome</keyword>
<keyword id="KW-0804">Transcription</keyword>
<evidence type="ECO:0000250" key="1"/>
<evidence type="ECO:0000305" key="2"/>
<name>RPB11_CAEBR</name>
<comment type="function">
    <text evidence="1">DNA-dependent RNA polymerase catalyzes the transcription of DNA into RNA using the four ribonucleoside triphosphates as substrates. Component of RNA polymerase II which synthesizes mRNA precursors and many functional non-coding RNAs. Pol II is the central component of the basal RNA polymerase II transcription machinery. It is composed of mobile elements that move relative to each other. RPB11 is part of the core element with the central large cleft (By similarity).</text>
</comment>
<comment type="subunit">
    <text evidence="1">Component of the RNA polymerase II (Pol II) complex consisting of 12 subunits.</text>
</comment>
<comment type="subcellular location">
    <subcellularLocation>
        <location evidence="1">Nucleus</location>
    </subcellularLocation>
</comment>
<comment type="similarity">
    <text evidence="2">Belongs to the archaeal Rpo11/eukaryotic RPB11/RPC19 RNA polymerase subunit family.</text>
</comment>
<protein>
    <recommendedName>
        <fullName>Probable DNA-directed RNA polymerase II subunit RPB11</fullName>
        <shortName>RNA polymerase II subunit B11</shortName>
    </recommendedName>
    <alternativeName>
        <fullName>DNA-directed RNA polymerase II subunit J</fullName>
    </alternativeName>
</protein>
<feature type="chain" id="PRO_0000232460" description="Probable DNA-directed RNA polymerase II subunit RPB11">
    <location>
        <begin position="1"/>
        <end position="122"/>
    </location>
</feature>
<sequence length="122" mass="13622">MNAPAAFESFLLLDDKKIYIEKDTKVPNAAIFTINKEDHTLGNMLKIQLLKDPEVLFAGYKNPHPLEHKILLRVQTTNATTPADALTTAITDLVGELSLLEHRIDSAIKKCTQSTDTERGYN</sequence>
<organism>
    <name type="scientific">Caenorhabditis briggsae</name>
    <dbReference type="NCBI Taxonomy" id="6238"/>
    <lineage>
        <taxon>Eukaryota</taxon>
        <taxon>Metazoa</taxon>
        <taxon>Ecdysozoa</taxon>
        <taxon>Nematoda</taxon>
        <taxon>Chromadorea</taxon>
        <taxon>Rhabditida</taxon>
        <taxon>Rhabditina</taxon>
        <taxon>Rhabditomorpha</taxon>
        <taxon>Rhabditoidea</taxon>
        <taxon>Rhabditidae</taxon>
        <taxon>Peloderinae</taxon>
        <taxon>Caenorhabditis</taxon>
    </lineage>
</organism>
<dbReference type="EMBL" id="HE600928">
    <property type="protein sequence ID" value="CAP37776.1"/>
    <property type="molecule type" value="Genomic_DNA"/>
</dbReference>
<dbReference type="SMR" id="Q60SM4"/>
<dbReference type="FunCoup" id="Q60SM4">
    <property type="interactions" value="1777"/>
</dbReference>
<dbReference type="STRING" id="6238.Q60SM4"/>
<dbReference type="EnsemblMetazoa" id="CBG20834.1">
    <property type="protein sequence ID" value="CBG20834.1"/>
    <property type="gene ID" value="WBGene00039747"/>
</dbReference>
<dbReference type="KEGG" id="cbr:CBG_20834"/>
<dbReference type="CTD" id="8573642"/>
<dbReference type="WormBase" id="CBG20834">
    <property type="protein sequence ID" value="CBP19941"/>
    <property type="gene ID" value="WBGene00039747"/>
    <property type="gene designation" value="Cbr-rpb-11"/>
</dbReference>
<dbReference type="eggNOG" id="KOG4392">
    <property type="taxonomic scope" value="Eukaryota"/>
</dbReference>
<dbReference type="HOGENOM" id="CLU_090381_2_2_1"/>
<dbReference type="InParanoid" id="Q60SM4"/>
<dbReference type="OMA" id="MNAPSRY"/>
<dbReference type="OrthoDB" id="10248581at2759"/>
<dbReference type="Proteomes" id="UP000008549">
    <property type="component" value="Unassembled WGS sequence"/>
</dbReference>
<dbReference type="GO" id="GO:0005665">
    <property type="term" value="C:RNA polymerase II, core complex"/>
    <property type="evidence" value="ECO:0000318"/>
    <property type="project" value="GO_Central"/>
</dbReference>
<dbReference type="GO" id="GO:0003677">
    <property type="term" value="F:DNA binding"/>
    <property type="evidence" value="ECO:0007669"/>
    <property type="project" value="InterPro"/>
</dbReference>
<dbReference type="GO" id="GO:0003899">
    <property type="term" value="F:DNA-directed RNA polymerase activity"/>
    <property type="evidence" value="ECO:0007669"/>
    <property type="project" value="InterPro"/>
</dbReference>
<dbReference type="GO" id="GO:0046983">
    <property type="term" value="F:protein dimerization activity"/>
    <property type="evidence" value="ECO:0007669"/>
    <property type="project" value="InterPro"/>
</dbReference>
<dbReference type="GO" id="GO:0006366">
    <property type="term" value="P:transcription by RNA polymerase II"/>
    <property type="evidence" value="ECO:0000318"/>
    <property type="project" value="GO_Central"/>
</dbReference>
<dbReference type="CDD" id="cd06926">
    <property type="entry name" value="RNAP_II_RPB11"/>
    <property type="match status" value="1"/>
</dbReference>
<dbReference type="FunFam" id="3.30.1360.10:FF:000003">
    <property type="entry name" value="DNA-directed RNA polymerase II subunit RPB11"/>
    <property type="match status" value="1"/>
</dbReference>
<dbReference type="Gene3D" id="3.30.1360.10">
    <property type="entry name" value="RNA polymerase, RBP11-like subunit"/>
    <property type="match status" value="1"/>
</dbReference>
<dbReference type="HAMAP" id="MF_00261">
    <property type="entry name" value="RNApol_arch_Rpo11"/>
    <property type="match status" value="1"/>
</dbReference>
<dbReference type="InterPro" id="IPR037685">
    <property type="entry name" value="RBP11"/>
</dbReference>
<dbReference type="InterPro" id="IPR036603">
    <property type="entry name" value="RBP11-like"/>
</dbReference>
<dbReference type="InterPro" id="IPR009025">
    <property type="entry name" value="RBP11-like_dimer"/>
</dbReference>
<dbReference type="InterPro" id="IPR008193">
    <property type="entry name" value="RNA_pol_Rpb11_13-16kDa_CS"/>
</dbReference>
<dbReference type="InterPro" id="IPR022905">
    <property type="entry name" value="Rpo11-like"/>
</dbReference>
<dbReference type="PANTHER" id="PTHR13946">
    <property type="entry name" value="DNA-DIRECTED RNA POLYMERASE I,II,III"/>
    <property type="match status" value="1"/>
</dbReference>
<dbReference type="PANTHER" id="PTHR13946:SF16">
    <property type="entry name" value="DNA-DIRECTED RNA POLYMERASE II SUBUNIT RPB11"/>
    <property type="match status" value="1"/>
</dbReference>
<dbReference type="Pfam" id="PF13656">
    <property type="entry name" value="RNA_pol_L_2"/>
    <property type="match status" value="1"/>
</dbReference>
<dbReference type="SUPFAM" id="SSF55257">
    <property type="entry name" value="RBP11-like subunits of RNA polymerase"/>
    <property type="match status" value="1"/>
</dbReference>
<dbReference type="PROSITE" id="PS01154">
    <property type="entry name" value="RNA_POL_L_13KD"/>
    <property type="match status" value="1"/>
</dbReference>
<proteinExistence type="inferred from homology"/>
<reference key="1">
    <citation type="journal article" date="2003" name="PLoS Biol.">
        <title>The genome sequence of Caenorhabditis briggsae: a platform for comparative genomics.</title>
        <authorList>
            <person name="Stein L.D."/>
            <person name="Bao Z."/>
            <person name="Blasiar D."/>
            <person name="Blumenthal T."/>
            <person name="Brent M.R."/>
            <person name="Chen N."/>
            <person name="Chinwalla A."/>
            <person name="Clarke L."/>
            <person name="Clee C."/>
            <person name="Coghlan A."/>
            <person name="Coulson A."/>
            <person name="D'Eustachio P."/>
            <person name="Fitch D.H.A."/>
            <person name="Fulton L.A."/>
            <person name="Fulton R.E."/>
            <person name="Griffiths-Jones S."/>
            <person name="Harris T.W."/>
            <person name="Hillier L.W."/>
            <person name="Kamath R."/>
            <person name="Kuwabara P.E."/>
            <person name="Mardis E.R."/>
            <person name="Marra M.A."/>
            <person name="Miner T.L."/>
            <person name="Minx P."/>
            <person name="Mullikin J.C."/>
            <person name="Plumb R.W."/>
            <person name="Rogers J."/>
            <person name="Schein J.E."/>
            <person name="Sohrmann M."/>
            <person name="Spieth J."/>
            <person name="Stajich J.E."/>
            <person name="Wei C."/>
            <person name="Willey D."/>
            <person name="Wilson R.K."/>
            <person name="Durbin R.M."/>
            <person name="Waterston R.H."/>
        </authorList>
    </citation>
    <scope>NUCLEOTIDE SEQUENCE [LARGE SCALE GENOMIC DNA]</scope>
    <source>
        <strain>AF16</strain>
    </source>
</reference>